<gene>
    <name evidence="1" type="primary">def</name>
    <name type="ordered locus">TC_0632</name>
</gene>
<dbReference type="EC" id="3.5.1.88" evidence="1"/>
<dbReference type="EMBL" id="AE002160">
    <property type="protein sequence ID" value="AAF39461.1"/>
    <property type="molecule type" value="Genomic_DNA"/>
</dbReference>
<dbReference type="PIR" id="C81680">
    <property type="entry name" value="C81680"/>
</dbReference>
<dbReference type="RefSeq" id="WP_010231067.1">
    <property type="nucleotide sequence ID" value="NZ_CP063055.1"/>
</dbReference>
<dbReference type="SMR" id="Q9PK41"/>
<dbReference type="GeneID" id="1245992"/>
<dbReference type="KEGG" id="cmu:TC_0632"/>
<dbReference type="eggNOG" id="COG0242">
    <property type="taxonomic scope" value="Bacteria"/>
</dbReference>
<dbReference type="HOGENOM" id="CLU_061901_2_0_0"/>
<dbReference type="OrthoDB" id="9784988at2"/>
<dbReference type="Proteomes" id="UP000000800">
    <property type="component" value="Chromosome"/>
</dbReference>
<dbReference type="GO" id="GO:0046872">
    <property type="term" value="F:metal ion binding"/>
    <property type="evidence" value="ECO:0007669"/>
    <property type="project" value="UniProtKB-KW"/>
</dbReference>
<dbReference type="GO" id="GO:0042586">
    <property type="term" value="F:peptide deformylase activity"/>
    <property type="evidence" value="ECO:0007669"/>
    <property type="project" value="UniProtKB-UniRule"/>
</dbReference>
<dbReference type="GO" id="GO:0043686">
    <property type="term" value="P:co-translational protein modification"/>
    <property type="evidence" value="ECO:0007669"/>
    <property type="project" value="TreeGrafter"/>
</dbReference>
<dbReference type="GO" id="GO:0006412">
    <property type="term" value="P:translation"/>
    <property type="evidence" value="ECO:0007669"/>
    <property type="project" value="UniProtKB-UniRule"/>
</dbReference>
<dbReference type="CDD" id="cd00487">
    <property type="entry name" value="Pep_deformylase"/>
    <property type="match status" value="1"/>
</dbReference>
<dbReference type="Gene3D" id="3.90.45.10">
    <property type="entry name" value="Peptide deformylase"/>
    <property type="match status" value="1"/>
</dbReference>
<dbReference type="HAMAP" id="MF_00163">
    <property type="entry name" value="Pep_deformylase"/>
    <property type="match status" value="1"/>
</dbReference>
<dbReference type="InterPro" id="IPR023635">
    <property type="entry name" value="Peptide_deformylase"/>
</dbReference>
<dbReference type="InterPro" id="IPR036821">
    <property type="entry name" value="Peptide_deformylase_sf"/>
</dbReference>
<dbReference type="NCBIfam" id="TIGR00079">
    <property type="entry name" value="pept_deformyl"/>
    <property type="match status" value="1"/>
</dbReference>
<dbReference type="NCBIfam" id="NF001159">
    <property type="entry name" value="PRK00150.1-3"/>
    <property type="match status" value="1"/>
</dbReference>
<dbReference type="PANTHER" id="PTHR10458">
    <property type="entry name" value="PEPTIDE DEFORMYLASE"/>
    <property type="match status" value="1"/>
</dbReference>
<dbReference type="PANTHER" id="PTHR10458:SF22">
    <property type="entry name" value="PEPTIDE DEFORMYLASE"/>
    <property type="match status" value="1"/>
</dbReference>
<dbReference type="Pfam" id="PF01327">
    <property type="entry name" value="Pep_deformylase"/>
    <property type="match status" value="1"/>
</dbReference>
<dbReference type="PIRSF" id="PIRSF004749">
    <property type="entry name" value="Pep_def"/>
    <property type="match status" value="1"/>
</dbReference>
<dbReference type="PRINTS" id="PR01576">
    <property type="entry name" value="PDEFORMYLASE"/>
</dbReference>
<dbReference type="SUPFAM" id="SSF56420">
    <property type="entry name" value="Peptide deformylase"/>
    <property type="match status" value="1"/>
</dbReference>
<reference key="1">
    <citation type="journal article" date="2000" name="Nucleic Acids Res.">
        <title>Genome sequences of Chlamydia trachomatis MoPn and Chlamydia pneumoniae AR39.</title>
        <authorList>
            <person name="Read T.D."/>
            <person name="Brunham R.C."/>
            <person name="Shen C."/>
            <person name="Gill S.R."/>
            <person name="Heidelberg J.F."/>
            <person name="White O."/>
            <person name="Hickey E.K."/>
            <person name="Peterson J.D."/>
            <person name="Utterback T.R."/>
            <person name="Berry K.J."/>
            <person name="Bass S."/>
            <person name="Linher K.D."/>
            <person name="Weidman J.F."/>
            <person name="Khouri H.M."/>
            <person name="Craven B."/>
            <person name="Bowman C."/>
            <person name="Dodson R.J."/>
            <person name="Gwinn M.L."/>
            <person name="Nelson W.C."/>
            <person name="DeBoy R.T."/>
            <person name="Kolonay J.F."/>
            <person name="McClarty G."/>
            <person name="Salzberg S.L."/>
            <person name="Eisen J.A."/>
            <person name="Fraser C.M."/>
        </authorList>
    </citation>
    <scope>NUCLEOTIDE SEQUENCE [LARGE SCALE GENOMIC DNA]</scope>
    <source>
        <strain>MoPn / Nigg</strain>
    </source>
</reference>
<sequence>MIRDLEYYDSPILRKVAAPIDEITDELRQLVLDMSETMTFYKGVGLAAPQVGHSVALFIMGVEKELDDGELIFCDFPKVFINPVITQKSEQLVYGNEGCLSIPGLRGEVARPDKITVTAKNLDGQPFSMTLEGFLARIVMHETDHLHGVLYIDRMSDKDKTKQFKNNLEKIRRKYSILRGL</sequence>
<evidence type="ECO:0000255" key="1">
    <source>
        <dbReference type="HAMAP-Rule" id="MF_00163"/>
    </source>
</evidence>
<feature type="chain" id="PRO_0000082761" description="Peptide deformylase">
    <location>
        <begin position="1"/>
        <end position="181"/>
    </location>
</feature>
<feature type="active site" evidence="1">
    <location>
        <position position="142"/>
    </location>
</feature>
<feature type="binding site" evidence="1">
    <location>
        <position position="99"/>
    </location>
    <ligand>
        <name>Fe cation</name>
        <dbReference type="ChEBI" id="CHEBI:24875"/>
    </ligand>
</feature>
<feature type="binding site" evidence="1">
    <location>
        <position position="141"/>
    </location>
    <ligand>
        <name>Fe cation</name>
        <dbReference type="ChEBI" id="CHEBI:24875"/>
    </ligand>
</feature>
<feature type="binding site" evidence="1">
    <location>
        <position position="145"/>
    </location>
    <ligand>
        <name>Fe cation</name>
        <dbReference type="ChEBI" id="CHEBI:24875"/>
    </ligand>
</feature>
<keyword id="KW-0378">Hydrolase</keyword>
<keyword id="KW-0408">Iron</keyword>
<keyword id="KW-0479">Metal-binding</keyword>
<keyword id="KW-0648">Protein biosynthesis</keyword>
<name>DEF_CHLMU</name>
<proteinExistence type="inferred from homology"/>
<accession>Q9PK41</accession>
<organism>
    <name type="scientific">Chlamydia muridarum (strain MoPn / Nigg)</name>
    <dbReference type="NCBI Taxonomy" id="243161"/>
    <lineage>
        <taxon>Bacteria</taxon>
        <taxon>Pseudomonadati</taxon>
        <taxon>Chlamydiota</taxon>
        <taxon>Chlamydiia</taxon>
        <taxon>Chlamydiales</taxon>
        <taxon>Chlamydiaceae</taxon>
        <taxon>Chlamydia/Chlamydophila group</taxon>
        <taxon>Chlamydia</taxon>
    </lineage>
</organism>
<comment type="function">
    <text evidence="1">Removes the formyl group from the N-terminal Met of newly synthesized proteins. Requires at least a dipeptide for an efficient rate of reaction. N-terminal L-methionine is a prerequisite for activity but the enzyme has broad specificity at other positions.</text>
</comment>
<comment type="catalytic activity">
    <reaction evidence="1">
        <text>N-terminal N-formyl-L-methionyl-[peptide] + H2O = N-terminal L-methionyl-[peptide] + formate</text>
        <dbReference type="Rhea" id="RHEA:24420"/>
        <dbReference type="Rhea" id="RHEA-COMP:10639"/>
        <dbReference type="Rhea" id="RHEA-COMP:10640"/>
        <dbReference type="ChEBI" id="CHEBI:15377"/>
        <dbReference type="ChEBI" id="CHEBI:15740"/>
        <dbReference type="ChEBI" id="CHEBI:49298"/>
        <dbReference type="ChEBI" id="CHEBI:64731"/>
        <dbReference type="EC" id="3.5.1.88"/>
    </reaction>
</comment>
<comment type="cofactor">
    <cofactor evidence="1">
        <name>Fe(2+)</name>
        <dbReference type="ChEBI" id="CHEBI:29033"/>
    </cofactor>
    <text evidence="1">Binds 1 Fe(2+) ion.</text>
</comment>
<comment type="similarity">
    <text evidence="1">Belongs to the polypeptide deformylase family.</text>
</comment>
<protein>
    <recommendedName>
        <fullName evidence="1">Peptide deformylase</fullName>
        <shortName evidence="1">PDF</shortName>
        <ecNumber evidence="1">3.5.1.88</ecNumber>
    </recommendedName>
    <alternativeName>
        <fullName evidence="1">Polypeptide deformylase</fullName>
    </alternativeName>
</protein>